<proteinExistence type="inferred from homology"/>
<organism>
    <name type="scientific">Citrifermentans bemidjiense (strain ATCC BAA-1014 / DSM 16622 / JCM 12645 / Bem)</name>
    <name type="common">Geobacter bemidjiensis</name>
    <dbReference type="NCBI Taxonomy" id="404380"/>
    <lineage>
        <taxon>Bacteria</taxon>
        <taxon>Pseudomonadati</taxon>
        <taxon>Thermodesulfobacteriota</taxon>
        <taxon>Desulfuromonadia</taxon>
        <taxon>Geobacterales</taxon>
        <taxon>Geobacteraceae</taxon>
        <taxon>Citrifermentans</taxon>
    </lineage>
</organism>
<protein>
    <recommendedName>
        <fullName evidence="1">Small ribosomal subunit protein bS16</fullName>
    </recommendedName>
    <alternativeName>
        <fullName evidence="2">30S ribosomal protein S16</fullName>
    </alternativeName>
</protein>
<sequence>MAIKIRLARAGAKKKPFYQVVVADCRCRRDGRFIENVGTYDPNKNPAVYNLEEGKTLEWLGKGAQPTDTVKQILKKVGIWEKFVSPAA</sequence>
<reference key="1">
    <citation type="submission" date="2008-07" db="EMBL/GenBank/DDBJ databases">
        <title>Complete sequence of Geobacter bemidjiensis BEM.</title>
        <authorList>
            <consortium name="US DOE Joint Genome Institute"/>
            <person name="Lucas S."/>
            <person name="Copeland A."/>
            <person name="Lapidus A."/>
            <person name="Glavina del Rio T."/>
            <person name="Dalin E."/>
            <person name="Tice H."/>
            <person name="Bruce D."/>
            <person name="Goodwin L."/>
            <person name="Pitluck S."/>
            <person name="Kiss H."/>
            <person name="Brettin T."/>
            <person name="Detter J.C."/>
            <person name="Han C."/>
            <person name="Kuske C.R."/>
            <person name="Schmutz J."/>
            <person name="Larimer F."/>
            <person name="Land M."/>
            <person name="Hauser L."/>
            <person name="Kyrpides N."/>
            <person name="Lykidis A."/>
            <person name="Lovley D."/>
            <person name="Richardson P."/>
        </authorList>
    </citation>
    <scope>NUCLEOTIDE SEQUENCE [LARGE SCALE GENOMIC DNA]</scope>
    <source>
        <strain>ATCC BAA-1014 / DSM 16622 / JCM 12645 / Bem</strain>
    </source>
</reference>
<keyword id="KW-1185">Reference proteome</keyword>
<keyword id="KW-0687">Ribonucleoprotein</keyword>
<keyword id="KW-0689">Ribosomal protein</keyword>
<comment type="similarity">
    <text evidence="1">Belongs to the bacterial ribosomal protein bS16 family.</text>
</comment>
<accession>B5EBD2</accession>
<gene>
    <name evidence="1" type="primary">rpsP</name>
    <name type="ordered locus">Gbem_3431</name>
</gene>
<evidence type="ECO:0000255" key="1">
    <source>
        <dbReference type="HAMAP-Rule" id="MF_00385"/>
    </source>
</evidence>
<evidence type="ECO:0000305" key="2"/>
<name>RS16_CITBB</name>
<feature type="chain" id="PRO_1000196410" description="Small ribosomal subunit protein bS16">
    <location>
        <begin position="1"/>
        <end position="88"/>
    </location>
</feature>
<dbReference type="EMBL" id="CP001124">
    <property type="protein sequence ID" value="ACH40424.1"/>
    <property type="molecule type" value="Genomic_DNA"/>
</dbReference>
<dbReference type="RefSeq" id="WP_012531857.1">
    <property type="nucleotide sequence ID" value="NC_011146.1"/>
</dbReference>
<dbReference type="SMR" id="B5EBD2"/>
<dbReference type="STRING" id="404380.Gbem_3431"/>
<dbReference type="KEGG" id="gbm:Gbem_3431"/>
<dbReference type="eggNOG" id="COG0228">
    <property type="taxonomic scope" value="Bacteria"/>
</dbReference>
<dbReference type="HOGENOM" id="CLU_100590_5_0_7"/>
<dbReference type="OrthoDB" id="9807878at2"/>
<dbReference type="Proteomes" id="UP000008825">
    <property type="component" value="Chromosome"/>
</dbReference>
<dbReference type="GO" id="GO:0005737">
    <property type="term" value="C:cytoplasm"/>
    <property type="evidence" value="ECO:0007669"/>
    <property type="project" value="UniProtKB-ARBA"/>
</dbReference>
<dbReference type="GO" id="GO:0015935">
    <property type="term" value="C:small ribosomal subunit"/>
    <property type="evidence" value="ECO:0007669"/>
    <property type="project" value="TreeGrafter"/>
</dbReference>
<dbReference type="GO" id="GO:0003735">
    <property type="term" value="F:structural constituent of ribosome"/>
    <property type="evidence" value="ECO:0007669"/>
    <property type="project" value="InterPro"/>
</dbReference>
<dbReference type="GO" id="GO:0006412">
    <property type="term" value="P:translation"/>
    <property type="evidence" value="ECO:0007669"/>
    <property type="project" value="UniProtKB-UniRule"/>
</dbReference>
<dbReference type="Gene3D" id="3.30.1320.10">
    <property type="match status" value="1"/>
</dbReference>
<dbReference type="HAMAP" id="MF_00385">
    <property type="entry name" value="Ribosomal_bS16"/>
    <property type="match status" value="1"/>
</dbReference>
<dbReference type="InterPro" id="IPR000307">
    <property type="entry name" value="Ribosomal_bS16"/>
</dbReference>
<dbReference type="InterPro" id="IPR020592">
    <property type="entry name" value="Ribosomal_bS16_CS"/>
</dbReference>
<dbReference type="InterPro" id="IPR023803">
    <property type="entry name" value="Ribosomal_bS16_dom_sf"/>
</dbReference>
<dbReference type="NCBIfam" id="TIGR00002">
    <property type="entry name" value="S16"/>
    <property type="match status" value="1"/>
</dbReference>
<dbReference type="PANTHER" id="PTHR12919">
    <property type="entry name" value="30S RIBOSOMAL PROTEIN S16"/>
    <property type="match status" value="1"/>
</dbReference>
<dbReference type="PANTHER" id="PTHR12919:SF20">
    <property type="entry name" value="SMALL RIBOSOMAL SUBUNIT PROTEIN BS16M"/>
    <property type="match status" value="1"/>
</dbReference>
<dbReference type="Pfam" id="PF00886">
    <property type="entry name" value="Ribosomal_S16"/>
    <property type="match status" value="1"/>
</dbReference>
<dbReference type="SUPFAM" id="SSF54565">
    <property type="entry name" value="Ribosomal protein S16"/>
    <property type="match status" value="1"/>
</dbReference>
<dbReference type="PROSITE" id="PS00732">
    <property type="entry name" value="RIBOSOMAL_S16"/>
    <property type="match status" value="1"/>
</dbReference>